<gene>
    <name evidence="1" type="primary">ctaB</name>
    <name type="synonym">coxX</name>
    <name type="ordered locus">RL1023</name>
</gene>
<evidence type="ECO:0000255" key="1">
    <source>
        <dbReference type="HAMAP-Rule" id="MF_00154"/>
    </source>
</evidence>
<feature type="chain" id="PRO_0000327130" description="Protoheme IX farnesyltransferase">
    <location>
        <begin position="1"/>
        <end position="316"/>
    </location>
</feature>
<feature type="transmembrane region" description="Helical" evidence="1">
    <location>
        <begin position="32"/>
        <end position="52"/>
    </location>
</feature>
<feature type="transmembrane region" description="Helical" evidence="1">
    <location>
        <begin position="53"/>
        <end position="73"/>
    </location>
</feature>
<feature type="transmembrane region" description="Helical" evidence="1">
    <location>
        <begin position="93"/>
        <end position="113"/>
    </location>
</feature>
<feature type="transmembrane region" description="Helical" evidence="1">
    <location>
        <begin position="116"/>
        <end position="136"/>
    </location>
</feature>
<feature type="transmembrane region" description="Helical" evidence="1">
    <location>
        <begin position="152"/>
        <end position="172"/>
    </location>
</feature>
<feature type="transmembrane region" description="Helical" evidence="1">
    <location>
        <begin position="180"/>
        <end position="200"/>
    </location>
</feature>
<feature type="transmembrane region" description="Helical" evidence="1">
    <location>
        <begin position="221"/>
        <end position="241"/>
    </location>
</feature>
<feature type="transmembrane region" description="Helical" evidence="1">
    <location>
        <begin position="252"/>
        <end position="271"/>
    </location>
</feature>
<feature type="transmembrane region" description="Helical" evidence="1">
    <location>
        <begin position="289"/>
        <end position="309"/>
    </location>
</feature>
<accession>Q1MKI5</accession>
<reference key="1">
    <citation type="journal article" date="2006" name="Genome Biol.">
        <title>The genome of Rhizobium leguminosarum has recognizable core and accessory components.</title>
        <authorList>
            <person name="Young J.P.W."/>
            <person name="Crossman L.C."/>
            <person name="Johnston A.W.B."/>
            <person name="Thomson N.R."/>
            <person name="Ghazoui Z.F."/>
            <person name="Hull K.H."/>
            <person name="Wexler M."/>
            <person name="Curson A.R.J."/>
            <person name="Todd J.D."/>
            <person name="Poole P.S."/>
            <person name="Mauchline T.H."/>
            <person name="East A.K."/>
            <person name="Quail M.A."/>
            <person name="Churcher C."/>
            <person name="Arrowsmith C."/>
            <person name="Cherevach I."/>
            <person name="Chillingworth T."/>
            <person name="Clarke K."/>
            <person name="Cronin A."/>
            <person name="Davis P."/>
            <person name="Fraser A."/>
            <person name="Hance Z."/>
            <person name="Hauser H."/>
            <person name="Jagels K."/>
            <person name="Moule S."/>
            <person name="Mungall K."/>
            <person name="Norbertczak H."/>
            <person name="Rabbinowitsch E."/>
            <person name="Sanders M."/>
            <person name="Simmonds M."/>
            <person name="Whitehead S."/>
            <person name="Parkhill J."/>
        </authorList>
    </citation>
    <scope>NUCLEOTIDE SEQUENCE [LARGE SCALE GENOMIC DNA]</scope>
    <source>
        <strain>DSM 114642 / LMG 32736 / 3841</strain>
    </source>
</reference>
<protein>
    <recommendedName>
        <fullName evidence="1">Protoheme IX farnesyltransferase</fullName>
        <ecNumber evidence="1">2.5.1.141</ecNumber>
    </recommendedName>
    <alternativeName>
        <fullName evidence="1">Heme B farnesyltransferase</fullName>
    </alternativeName>
    <alternativeName>
        <fullName evidence="1">Heme O synthase</fullName>
    </alternativeName>
</protein>
<dbReference type="EC" id="2.5.1.141" evidence="1"/>
<dbReference type="EMBL" id="AM236080">
    <property type="protein sequence ID" value="CAK06520.1"/>
    <property type="molecule type" value="Genomic_DNA"/>
</dbReference>
<dbReference type="RefSeq" id="WP_011650758.1">
    <property type="nucleotide sequence ID" value="NC_008380.1"/>
</dbReference>
<dbReference type="SMR" id="Q1MKI5"/>
<dbReference type="EnsemblBacteria" id="CAK06520">
    <property type="protein sequence ID" value="CAK06520"/>
    <property type="gene ID" value="RL1023"/>
</dbReference>
<dbReference type="KEGG" id="rle:RL1023"/>
<dbReference type="eggNOG" id="COG0109">
    <property type="taxonomic scope" value="Bacteria"/>
</dbReference>
<dbReference type="HOGENOM" id="CLU_029631_0_2_5"/>
<dbReference type="UniPathway" id="UPA00834">
    <property type="reaction ID" value="UER00712"/>
</dbReference>
<dbReference type="Proteomes" id="UP000006575">
    <property type="component" value="Chromosome"/>
</dbReference>
<dbReference type="GO" id="GO:0005886">
    <property type="term" value="C:plasma membrane"/>
    <property type="evidence" value="ECO:0007669"/>
    <property type="project" value="UniProtKB-SubCell"/>
</dbReference>
<dbReference type="GO" id="GO:0008495">
    <property type="term" value="F:protoheme IX farnesyltransferase activity"/>
    <property type="evidence" value="ECO:0007669"/>
    <property type="project" value="UniProtKB-UniRule"/>
</dbReference>
<dbReference type="GO" id="GO:0048034">
    <property type="term" value="P:heme O biosynthetic process"/>
    <property type="evidence" value="ECO:0007669"/>
    <property type="project" value="UniProtKB-UniRule"/>
</dbReference>
<dbReference type="CDD" id="cd13957">
    <property type="entry name" value="PT_UbiA_Cox10"/>
    <property type="match status" value="1"/>
</dbReference>
<dbReference type="Gene3D" id="1.10.357.140">
    <property type="entry name" value="UbiA prenyltransferase"/>
    <property type="match status" value="1"/>
</dbReference>
<dbReference type="HAMAP" id="MF_00154">
    <property type="entry name" value="CyoE_CtaB"/>
    <property type="match status" value="1"/>
</dbReference>
<dbReference type="InterPro" id="IPR006369">
    <property type="entry name" value="Protohaem_IX_farnesylTrfase"/>
</dbReference>
<dbReference type="InterPro" id="IPR000537">
    <property type="entry name" value="UbiA_prenyltransferase"/>
</dbReference>
<dbReference type="InterPro" id="IPR030470">
    <property type="entry name" value="UbiA_prenylTrfase_CS"/>
</dbReference>
<dbReference type="InterPro" id="IPR044878">
    <property type="entry name" value="UbiA_sf"/>
</dbReference>
<dbReference type="NCBIfam" id="TIGR01473">
    <property type="entry name" value="cyoE_ctaB"/>
    <property type="match status" value="1"/>
</dbReference>
<dbReference type="NCBIfam" id="NF003349">
    <property type="entry name" value="PRK04375.1-2"/>
    <property type="match status" value="1"/>
</dbReference>
<dbReference type="PANTHER" id="PTHR43448:SF7">
    <property type="entry name" value="4-HYDROXYBENZOATE SOLANESYLTRANSFERASE"/>
    <property type="match status" value="1"/>
</dbReference>
<dbReference type="PANTHER" id="PTHR43448">
    <property type="entry name" value="PROTOHEME IX FARNESYLTRANSFERASE, MITOCHONDRIAL"/>
    <property type="match status" value="1"/>
</dbReference>
<dbReference type="Pfam" id="PF01040">
    <property type="entry name" value="UbiA"/>
    <property type="match status" value="1"/>
</dbReference>
<dbReference type="PROSITE" id="PS00943">
    <property type="entry name" value="UBIA"/>
    <property type="match status" value="1"/>
</dbReference>
<keyword id="KW-0997">Cell inner membrane</keyword>
<keyword id="KW-1003">Cell membrane</keyword>
<keyword id="KW-0350">Heme biosynthesis</keyword>
<keyword id="KW-0472">Membrane</keyword>
<keyword id="KW-0808">Transferase</keyword>
<keyword id="KW-0812">Transmembrane</keyword>
<keyword id="KW-1133">Transmembrane helix</keyword>
<organism>
    <name type="scientific">Rhizobium johnstonii (strain DSM 114642 / LMG 32736 / 3841)</name>
    <name type="common">Rhizobium leguminosarum bv. viciae</name>
    <dbReference type="NCBI Taxonomy" id="216596"/>
    <lineage>
        <taxon>Bacteria</taxon>
        <taxon>Pseudomonadati</taxon>
        <taxon>Pseudomonadota</taxon>
        <taxon>Alphaproteobacteria</taxon>
        <taxon>Hyphomicrobiales</taxon>
        <taxon>Rhizobiaceae</taxon>
        <taxon>Rhizobium/Agrobacterium group</taxon>
        <taxon>Rhizobium</taxon>
        <taxon>Rhizobium johnstonii</taxon>
    </lineage>
</organism>
<comment type="function">
    <text evidence="1">Converts heme B (protoheme IX) to heme O by substitution of the vinyl group on carbon 2 of heme B porphyrin ring with a hydroxyethyl farnesyl side group.</text>
</comment>
<comment type="catalytic activity">
    <reaction evidence="1">
        <text>heme b + (2E,6E)-farnesyl diphosphate + H2O = Fe(II)-heme o + diphosphate</text>
        <dbReference type="Rhea" id="RHEA:28070"/>
        <dbReference type="ChEBI" id="CHEBI:15377"/>
        <dbReference type="ChEBI" id="CHEBI:33019"/>
        <dbReference type="ChEBI" id="CHEBI:60344"/>
        <dbReference type="ChEBI" id="CHEBI:60530"/>
        <dbReference type="ChEBI" id="CHEBI:175763"/>
        <dbReference type="EC" id="2.5.1.141"/>
    </reaction>
</comment>
<comment type="pathway">
    <text evidence="1">Porphyrin-containing compound metabolism; heme O biosynthesis; heme O from protoheme: step 1/1.</text>
</comment>
<comment type="subcellular location">
    <subcellularLocation>
        <location evidence="1">Cell inner membrane</location>
        <topology evidence="1">Multi-pass membrane protein</topology>
    </subcellularLocation>
</comment>
<comment type="miscellaneous">
    <text evidence="1">Carbon 2 of the heme B porphyrin ring is defined according to the Fischer nomenclature.</text>
</comment>
<comment type="similarity">
    <text evidence="1">Belongs to the UbiA prenyltransferase family. Protoheme IX farnesyltransferase subfamily.</text>
</comment>
<sequence>MTVIDNHGVLAKDGELSEASARDYFELLKPRVMSLVVFTAFAGLVLAPGHIHPVLGTIAILCIAVGAGASGALNMWYDADIDAIMSRTANRPIPAGRIAPSEALAFGLVLSGFSVVILGLAVNWLSAGILAFTIFFYAVVYTMWLKRSTPQNIVIGGAAGAFPPMIGWACVTNSVTIESTVLFLIIFLWTPAHFWALALFKMRDYEAVGVPMLPNVAGERVTKHQIVAYAVLTAVCAVLPSFLGFASLGYGLVAAALGAIFIYCSIAVWRMPDGDLKMIPAKKLFGFSIFYLFAVFSALMIDRLAPVLVSHAGGWF</sequence>
<name>COXX_RHIJ3</name>
<proteinExistence type="inferred from homology"/>